<gene>
    <name evidence="1" type="primary">rnpA</name>
    <name type="ordered locus">SPP_2078</name>
</gene>
<comment type="function">
    <text evidence="1">RNaseP catalyzes the removal of the 5'-leader sequence from pre-tRNA to produce the mature 5'-terminus. It can also cleave other RNA substrates such as 4.5S RNA. The protein component plays an auxiliary but essential role in vivo by binding to the 5'-leader sequence and broadening the substrate specificity of the ribozyme.</text>
</comment>
<comment type="catalytic activity">
    <reaction evidence="1">
        <text>Endonucleolytic cleavage of RNA, removing 5'-extranucleotides from tRNA precursor.</text>
        <dbReference type="EC" id="3.1.26.5"/>
    </reaction>
</comment>
<comment type="subunit">
    <text evidence="1">Consists of a catalytic RNA component (M1 or rnpB) and a protein subunit.</text>
</comment>
<comment type="similarity">
    <text evidence="1">Belongs to the RnpA family.</text>
</comment>
<feature type="chain" id="PRO_1000194677" description="Ribonuclease P protein component">
    <location>
        <begin position="1"/>
        <end position="123"/>
    </location>
</feature>
<sequence>MKKNFRVKREKDFKAIFKEGTSFANRKFVVYQLENQKNHFRVGLSVSKKLGNAVTRNQIKRRIRHIIQNAKGSLVEDVDFVVIARKGVETLGYAEMEKNLLHVLKLSKIYREGNGSEKETKVD</sequence>
<reference key="1">
    <citation type="journal article" date="2010" name="Genome Biol.">
        <title>Structure and dynamics of the pan-genome of Streptococcus pneumoniae and closely related species.</title>
        <authorList>
            <person name="Donati C."/>
            <person name="Hiller N.L."/>
            <person name="Tettelin H."/>
            <person name="Muzzi A."/>
            <person name="Croucher N.J."/>
            <person name="Angiuoli S.V."/>
            <person name="Oggioni M."/>
            <person name="Dunning Hotopp J.C."/>
            <person name="Hu F.Z."/>
            <person name="Riley D.R."/>
            <person name="Covacci A."/>
            <person name="Mitchell T.J."/>
            <person name="Bentley S.D."/>
            <person name="Kilian M."/>
            <person name="Ehrlich G.D."/>
            <person name="Rappuoli R."/>
            <person name="Moxon E.R."/>
            <person name="Masignani V."/>
        </authorList>
    </citation>
    <scope>NUCLEOTIDE SEQUENCE [LARGE SCALE GENOMIC DNA]</scope>
    <source>
        <strain>P1031</strain>
    </source>
</reference>
<dbReference type="EC" id="3.1.26.5" evidence="1"/>
<dbReference type="EMBL" id="CP000920">
    <property type="protein sequence ID" value="ACO21965.1"/>
    <property type="molecule type" value="Genomic_DNA"/>
</dbReference>
<dbReference type="RefSeq" id="WP_000739246.1">
    <property type="nucleotide sequence ID" value="NC_012467.1"/>
</dbReference>
<dbReference type="SMR" id="C1CMY8"/>
<dbReference type="GeneID" id="45652735"/>
<dbReference type="KEGG" id="spp:SPP_2078"/>
<dbReference type="HOGENOM" id="CLU_117179_9_1_9"/>
<dbReference type="GO" id="GO:0030677">
    <property type="term" value="C:ribonuclease P complex"/>
    <property type="evidence" value="ECO:0007669"/>
    <property type="project" value="TreeGrafter"/>
</dbReference>
<dbReference type="GO" id="GO:0042781">
    <property type="term" value="F:3'-tRNA processing endoribonuclease activity"/>
    <property type="evidence" value="ECO:0007669"/>
    <property type="project" value="TreeGrafter"/>
</dbReference>
<dbReference type="GO" id="GO:0004526">
    <property type="term" value="F:ribonuclease P activity"/>
    <property type="evidence" value="ECO:0007669"/>
    <property type="project" value="UniProtKB-UniRule"/>
</dbReference>
<dbReference type="GO" id="GO:0000049">
    <property type="term" value="F:tRNA binding"/>
    <property type="evidence" value="ECO:0007669"/>
    <property type="project" value="UniProtKB-UniRule"/>
</dbReference>
<dbReference type="GO" id="GO:0001682">
    <property type="term" value="P:tRNA 5'-leader removal"/>
    <property type="evidence" value="ECO:0007669"/>
    <property type="project" value="UniProtKB-UniRule"/>
</dbReference>
<dbReference type="FunFam" id="3.30.230.10:FF:000021">
    <property type="entry name" value="Ribonuclease P protein component"/>
    <property type="match status" value="1"/>
</dbReference>
<dbReference type="Gene3D" id="3.30.230.10">
    <property type="match status" value="1"/>
</dbReference>
<dbReference type="HAMAP" id="MF_00227">
    <property type="entry name" value="RNase_P"/>
    <property type="match status" value="1"/>
</dbReference>
<dbReference type="InterPro" id="IPR020568">
    <property type="entry name" value="Ribosomal_Su5_D2-typ_SF"/>
</dbReference>
<dbReference type="InterPro" id="IPR014721">
    <property type="entry name" value="Ribsml_uS5_D2-typ_fold_subgr"/>
</dbReference>
<dbReference type="InterPro" id="IPR000100">
    <property type="entry name" value="RNase_P"/>
</dbReference>
<dbReference type="InterPro" id="IPR020539">
    <property type="entry name" value="RNase_P_CS"/>
</dbReference>
<dbReference type="NCBIfam" id="TIGR00188">
    <property type="entry name" value="rnpA"/>
    <property type="match status" value="1"/>
</dbReference>
<dbReference type="PANTHER" id="PTHR33992">
    <property type="entry name" value="RIBONUCLEASE P PROTEIN COMPONENT"/>
    <property type="match status" value="1"/>
</dbReference>
<dbReference type="PANTHER" id="PTHR33992:SF1">
    <property type="entry name" value="RIBONUCLEASE P PROTEIN COMPONENT"/>
    <property type="match status" value="1"/>
</dbReference>
<dbReference type="Pfam" id="PF00825">
    <property type="entry name" value="Ribonuclease_P"/>
    <property type="match status" value="1"/>
</dbReference>
<dbReference type="SUPFAM" id="SSF54211">
    <property type="entry name" value="Ribosomal protein S5 domain 2-like"/>
    <property type="match status" value="1"/>
</dbReference>
<dbReference type="PROSITE" id="PS00648">
    <property type="entry name" value="RIBONUCLEASE_P"/>
    <property type="match status" value="1"/>
</dbReference>
<name>RNPA_STRZP</name>
<organism>
    <name type="scientific">Streptococcus pneumoniae (strain P1031)</name>
    <dbReference type="NCBI Taxonomy" id="488223"/>
    <lineage>
        <taxon>Bacteria</taxon>
        <taxon>Bacillati</taxon>
        <taxon>Bacillota</taxon>
        <taxon>Bacilli</taxon>
        <taxon>Lactobacillales</taxon>
        <taxon>Streptococcaceae</taxon>
        <taxon>Streptococcus</taxon>
    </lineage>
</organism>
<keyword id="KW-0255">Endonuclease</keyword>
<keyword id="KW-0378">Hydrolase</keyword>
<keyword id="KW-0540">Nuclease</keyword>
<keyword id="KW-0694">RNA-binding</keyword>
<keyword id="KW-0819">tRNA processing</keyword>
<accession>C1CMY8</accession>
<evidence type="ECO:0000255" key="1">
    <source>
        <dbReference type="HAMAP-Rule" id="MF_00227"/>
    </source>
</evidence>
<protein>
    <recommendedName>
        <fullName evidence="1">Ribonuclease P protein component</fullName>
        <shortName evidence="1">RNase P protein</shortName>
        <shortName evidence="1">RNaseP protein</shortName>
        <ecNumber evidence="1">3.1.26.5</ecNumber>
    </recommendedName>
    <alternativeName>
        <fullName evidence="1">Protein C5</fullName>
    </alternativeName>
</protein>
<proteinExistence type="inferred from homology"/>